<keyword id="KW-0963">Cytoplasm</keyword>
<keyword id="KW-0255">Endonuclease</keyword>
<keyword id="KW-0378">Hydrolase</keyword>
<keyword id="KW-0479">Metal-binding</keyword>
<keyword id="KW-0540">Nuclease</keyword>
<keyword id="KW-1185">Reference proteome</keyword>
<keyword id="KW-0690">Ribosome biogenesis</keyword>
<keyword id="KW-0698">rRNA processing</keyword>
<keyword id="KW-0862">Zinc</keyword>
<protein>
    <recommendedName>
        <fullName evidence="1">Endoribonuclease YbeY</fullName>
        <ecNumber evidence="1">3.1.-.-</ecNumber>
    </recommendedName>
</protein>
<reference key="1">
    <citation type="journal article" date="2003" name="Proc. Natl. Acad. Sci. U.S.A.">
        <title>Reductive genome evolution in Buchnera aphidicola.</title>
        <authorList>
            <person name="van Ham R.C.H.J."/>
            <person name="Kamerbeek J."/>
            <person name="Palacios C."/>
            <person name="Rausell C."/>
            <person name="Abascal F."/>
            <person name="Bastolla U."/>
            <person name="Fernandez J.M."/>
            <person name="Jimenez L."/>
            <person name="Postigo M."/>
            <person name="Silva F.J."/>
            <person name="Tamames J."/>
            <person name="Viguera E."/>
            <person name="Latorre A."/>
            <person name="Valencia A."/>
            <person name="Moran F."/>
            <person name="Moya A."/>
        </authorList>
    </citation>
    <scope>NUCLEOTIDE SEQUENCE [LARGE SCALE GENOMIC DNA]</scope>
    <source>
        <strain>Bp</strain>
    </source>
</reference>
<accession>P59478</accession>
<comment type="function">
    <text evidence="1">Single strand-specific metallo-endoribonuclease involved in late-stage 70S ribosome quality control and in maturation of the 3' terminus of the 16S rRNA.</text>
</comment>
<comment type="cofactor">
    <cofactor evidence="1">
        <name>Zn(2+)</name>
        <dbReference type="ChEBI" id="CHEBI:29105"/>
    </cofactor>
    <text evidence="1">Binds 1 zinc ion.</text>
</comment>
<comment type="subcellular location">
    <subcellularLocation>
        <location evidence="1">Cytoplasm</location>
    </subcellularLocation>
</comment>
<comment type="similarity">
    <text evidence="1">Belongs to the endoribonuclease YbeY family.</text>
</comment>
<gene>
    <name evidence="1" type="primary">ybeY</name>
    <name type="ordered locus">bbp_393</name>
</gene>
<evidence type="ECO:0000255" key="1">
    <source>
        <dbReference type="HAMAP-Rule" id="MF_00009"/>
    </source>
</evidence>
<sequence>MNKKITLNIQIASKKIIFLPKKCQYLIWIRSSLMHVYQSNIKVLIRIVEKSEIKSLNYKFRQKNKATNILSFSYINDKMIDKNYIGDLIICSEIVTEEAKKKNVTLESHWAHITIHGILHLLGYNHDNLNNRIKMEYLETKIMASLNYKNPYIY</sequence>
<organism>
    <name type="scientific">Buchnera aphidicola subsp. Baizongia pistaciae (strain Bp)</name>
    <dbReference type="NCBI Taxonomy" id="224915"/>
    <lineage>
        <taxon>Bacteria</taxon>
        <taxon>Pseudomonadati</taxon>
        <taxon>Pseudomonadota</taxon>
        <taxon>Gammaproteobacteria</taxon>
        <taxon>Enterobacterales</taxon>
        <taxon>Erwiniaceae</taxon>
        <taxon>Buchnera</taxon>
    </lineage>
</organism>
<proteinExistence type="inferred from homology"/>
<feature type="chain" id="PRO_0000102427" description="Endoribonuclease YbeY">
    <location>
        <begin position="1"/>
        <end position="154"/>
    </location>
</feature>
<feature type="binding site" evidence="1">
    <location>
        <position position="116"/>
    </location>
    <ligand>
        <name>Zn(2+)</name>
        <dbReference type="ChEBI" id="CHEBI:29105"/>
        <note>catalytic</note>
    </ligand>
</feature>
<feature type="binding site" evidence="1">
    <location>
        <position position="120"/>
    </location>
    <ligand>
        <name>Zn(2+)</name>
        <dbReference type="ChEBI" id="CHEBI:29105"/>
        <note>catalytic</note>
    </ligand>
</feature>
<feature type="binding site" evidence="1">
    <location>
        <position position="126"/>
    </location>
    <ligand>
        <name>Zn(2+)</name>
        <dbReference type="ChEBI" id="CHEBI:29105"/>
        <note>catalytic</note>
    </ligand>
</feature>
<name>YBEY_BUCBP</name>
<dbReference type="EC" id="3.1.-.-" evidence="1"/>
<dbReference type="EMBL" id="AE016826">
    <property type="protein sequence ID" value="AAO27105.1"/>
    <property type="molecule type" value="Genomic_DNA"/>
</dbReference>
<dbReference type="RefSeq" id="WP_011091506.1">
    <property type="nucleotide sequence ID" value="NC_004545.1"/>
</dbReference>
<dbReference type="SMR" id="P59478"/>
<dbReference type="STRING" id="224915.bbp_393"/>
<dbReference type="KEGG" id="bab:bbp_393"/>
<dbReference type="eggNOG" id="COG0319">
    <property type="taxonomic scope" value="Bacteria"/>
</dbReference>
<dbReference type="HOGENOM" id="CLU_106710_0_1_6"/>
<dbReference type="OrthoDB" id="9807740at2"/>
<dbReference type="Proteomes" id="UP000000601">
    <property type="component" value="Chromosome"/>
</dbReference>
<dbReference type="GO" id="GO:0005737">
    <property type="term" value="C:cytoplasm"/>
    <property type="evidence" value="ECO:0007669"/>
    <property type="project" value="UniProtKB-SubCell"/>
</dbReference>
<dbReference type="GO" id="GO:0004222">
    <property type="term" value="F:metalloendopeptidase activity"/>
    <property type="evidence" value="ECO:0007669"/>
    <property type="project" value="InterPro"/>
</dbReference>
<dbReference type="GO" id="GO:0004521">
    <property type="term" value="F:RNA endonuclease activity"/>
    <property type="evidence" value="ECO:0007669"/>
    <property type="project" value="UniProtKB-UniRule"/>
</dbReference>
<dbReference type="GO" id="GO:0008270">
    <property type="term" value="F:zinc ion binding"/>
    <property type="evidence" value="ECO:0007669"/>
    <property type="project" value="UniProtKB-UniRule"/>
</dbReference>
<dbReference type="GO" id="GO:0006364">
    <property type="term" value="P:rRNA processing"/>
    <property type="evidence" value="ECO:0007669"/>
    <property type="project" value="UniProtKB-UniRule"/>
</dbReference>
<dbReference type="Gene3D" id="3.40.390.30">
    <property type="entry name" value="Metalloproteases ('zincins'), catalytic domain"/>
    <property type="match status" value="1"/>
</dbReference>
<dbReference type="HAMAP" id="MF_00009">
    <property type="entry name" value="Endoribonucl_YbeY"/>
    <property type="match status" value="1"/>
</dbReference>
<dbReference type="InterPro" id="IPR023091">
    <property type="entry name" value="MetalPrtase_cat_dom_sf_prd"/>
</dbReference>
<dbReference type="InterPro" id="IPR002036">
    <property type="entry name" value="YbeY"/>
</dbReference>
<dbReference type="InterPro" id="IPR020549">
    <property type="entry name" value="YbeY_CS"/>
</dbReference>
<dbReference type="NCBIfam" id="TIGR00043">
    <property type="entry name" value="rRNA maturation RNase YbeY"/>
    <property type="match status" value="1"/>
</dbReference>
<dbReference type="PANTHER" id="PTHR46986">
    <property type="entry name" value="ENDORIBONUCLEASE YBEY, CHLOROPLASTIC"/>
    <property type="match status" value="1"/>
</dbReference>
<dbReference type="PANTHER" id="PTHR46986:SF1">
    <property type="entry name" value="ENDORIBONUCLEASE YBEY, CHLOROPLASTIC"/>
    <property type="match status" value="1"/>
</dbReference>
<dbReference type="Pfam" id="PF02130">
    <property type="entry name" value="YbeY"/>
    <property type="match status" value="1"/>
</dbReference>
<dbReference type="SUPFAM" id="SSF55486">
    <property type="entry name" value="Metalloproteases ('zincins'), catalytic domain"/>
    <property type="match status" value="1"/>
</dbReference>
<dbReference type="PROSITE" id="PS01306">
    <property type="entry name" value="UPF0054"/>
    <property type="match status" value="1"/>
</dbReference>